<feature type="initiator methionine" description="Removed" evidence="2">
    <location>
        <position position="1"/>
    </location>
</feature>
<feature type="chain" id="PRO_0000203659" description="Guanine nucleotide-binding protein alpha-17 subunit">
    <location>
        <begin position="2"/>
        <end position="356"/>
    </location>
</feature>
<feature type="domain" description="G-alpha" evidence="3">
    <location>
        <begin position="32"/>
        <end position="356"/>
    </location>
</feature>
<feature type="region of interest" description="G1 motif" evidence="3">
    <location>
        <begin position="35"/>
        <end position="48"/>
    </location>
</feature>
<feature type="region of interest" description="G2 motif" evidence="3">
    <location>
        <begin position="175"/>
        <end position="183"/>
    </location>
</feature>
<feature type="region of interest" description="G3 motif" evidence="3">
    <location>
        <begin position="198"/>
        <end position="207"/>
    </location>
</feature>
<feature type="region of interest" description="G4 motif" evidence="3">
    <location>
        <begin position="267"/>
        <end position="274"/>
    </location>
</feature>
<feature type="region of interest" description="G5 motif" evidence="3">
    <location>
        <begin position="326"/>
        <end position="331"/>
    </location>
</feature>
<feature type="binding site" evidence="1">
    <location>
        <begin position="40"/>
        <end position="47"/>
    </location>
    <ligand>
        <name>GTP</name>
        <dbReference type="ChEBI" id="CHEBI:37565"/>
    </ligand>
</feature>
<feature type="binding site" evidence="1">
    <location>
        <position position="47"/>
    </location>
    <ligand>
        <name>Mg(2+)</name>
        <dbReference type="ChEBI" id="CHEBI:18420"/>
    </ligand>
</feature>
<feature type="binding site" evidence="1">
    <location>
        <begin position="177"/>
        <end position="183"/>
    </location>
    <ligand>
        <name>GTP</name>
        <dbReference type="ChEBI" id="CHEBI:37565"/>
    </ligand>
</feature>
<feature type="binding site" evidence="1">
    <location>
        <position position="183"/>
    </location>
    <ligand>
        <name>Mg(2+)</name>
        <dbReference type="ChEBI" id="CHEBI:18420"/>
    </ligand>
</feature>
<feature type="binding site" evidence="1">
    <location>
        <begin position="202"/>
        <end position="206"/>
    </location>
    <ligand>
        <name>GTP</name>
        <dbReference type="ChEBI" id="CHEBI:37565"/>
    </ligand>
</feature>
<feature type="binding site" evidence="1">
    <location>
        <begin position="271"/>
        <end position="274"/>
    </location>
    <ligand>
        <name>GTP</name>
        <dbReference type="ChEBI" id="CHEBI:37565"/>
    </ligand>
</feature>
<feature type="binding site" evidence="1">
    <location>
        <position position="328"/>
    </location>
    <ligand>
        <name>GTP</name>
        <dbReference type="ChEBI" id="CHEBI:37565"/>
    </ligand>
</feature>
<feature type="lipid moiety-binding region" description="N-myristoyl glycine" evidence="2">
    <location>
        <position position="2"/>
    </location>
</feature>
<feature type="lipid moiety-binding region" description="S-palmitoyl cysteine" evidence="2">
    <location>
        <position position="4"/>
    </location>
</feature>
<feature type="mutagenesis site" description="Loss of chemotactic responses." evidence="10">
    <original>S</original>
    <variation>C</variation>
    <location>
        <position position="47"/>
    </location>
</feature>
<feature type="mutagenesis site" description="In ky879; defects in GPCR expression in the AWC neurons." evidence="8">
    <original>G</original>
    <variation>S</variation>
    <location>
        <position position="185"/>
    </location>
</feature>
<feature type="mutagenesis site" description="Loss of chemotactic and osmotic avoidance responses." evidence="10">
    <original>Q</original>
    <variation>L</variation>
    <location>
        <position position="206"/>
    </location>
</feature>
<dbReference type="EMBL" id="AY008142">
    <property type="protein sequence ID" value="AAG32095.1"/>
    <property type="molecule type" value="mRNA"/>
</dbReference>
<dbReference type="EMBL" id="FJ455729">
    <property type="protein sequence ID" value="ACQ43989.1"/>
    <property type="molecule type" value="Genomic_DNA"/>
</dbReference>
<dbReference type="EMBL" id="FJ455730">
    <property type="protein sequence ID" value="ACQ43990.1"/>
    <property type="molecule type" value="Genomic_DNA"/>
</dbReference>
<dbReference type="EMBL" id="FJ455731">
    <property type="protein sequence ID" value="ACQ43991.1"/>
    <property type="molecule type" value="Genomic_DNA"/>
</dbReference>
<dbReference type="EMBL" id="BX284605">
    <property type="protein sequence ID" value="CAB01489.1"/>
    <property type="molecule type" value="Genomic_DNA"/>
</dbReference>
<dbReference type="EMBL" id="AY146558">
    <property type="protein sequence ID" value="AAN78230.1"/>
    <property type="molecule type" value="Genomic_DNA"/>
</dbReference>
<dbReference type="EMBL" id="AY146559">
    <property type="protein sequence ID" value="AAN78231.1"/>
    <property type="molecule type" value="Genomic_DNA"/>
</dbReference>
<dbReference type="EMBL" id="AY146560">
    <property type="protein sequence ID" value="AAN78232.1"/>
    <property type="molecule type" value="Genomic_DNA"/>
</dbReference>
<dbReference type="EMBL" id="AY146561">
    <property type="protein sequence ID" value="AAN78233.1"/>
    <property type="molecule type" value="Genomic_DNA"/>
</dbReference>
<dbReference type="EMBL" id="AY146562">
    <property type="protein sequence ID" value="AAN78234.1"/>
    <property type="molecule type" value="Genomic_DNA"/>
</dbReference>
<dbReference type="EMBL" id="AY146563">
    <property type="protein sequence ID" value="AAN78235.1"/>
    <property type="molecule type" value="Genomic_DNA"/>
</dbReference>
<dbReference type="EMBL" id="AY146564">
    <property type="protein sequence ID" value="AAN78236.1"/>
    <property type="molecule type" value="Genomic_DNA"/>
</dbReference>
<dbReference type="EMBL" id="AY146565">
    <property type="protein sequence ID" value="AAN78237.1"/>
    <property type="molecule type" value="Genomic_DNA"/>
</dbReference>
<dbReference type="EMBL" id="AY146566">
    <property type="protein sequence ID" value="AAN78238.1"/>
    <property type="molecule type" value="Genomic_DNA"/>
</dbReference>
<dbReference type="PIR" id="T19715">
    <property type="entry name" value="T19715"/>
</dbReference>
<dbReference type="RefSeq" id="NP_506290.1">
    <property type="nucleotide sequence ID" value="NM_073889.3"/>
</dbReference>
<dbReference type="SMR" id="Q18434"/>
<dbReference type="BioGRID" id="44824">
    <property type="interactions" value="1"/>
</dbReference>
<dbReference type="FunCoup" id="Q18434">
    <property type="interactions" value="48"/>
</dbReference>
<dbReference type="STRING" id="6239.C34D1.3.1"/>
<dbReference type="PaxDb" id="6239-C34D1.3"/>
<dbReference type="PeptideAtlas" id="Q18434"/>
<dbReference type="EnsemblMetazoa" id="C34D1.3.1">
    <property type="protein sequence ID" value="C34D1.3.1"/>
    <property type="gene ID" value="WBGene00003850"/>
</dbReference>
<dbReference type="GeneID" id="179806"/>
<dbReference type="KEGG" id="cel:CELE_C34D1.3"/>
<dbReference type="UCSC" id="C34D1.3">
    <property type="organism name" value="c. elegans"/>
</dbReference>
<dbReference type="AGR" id="WB:WBGene00003850"/>
<dbReference type="CTD" id="179806"/>
<dbReference type="WormBase" id="C34D1.3">
    <property type="protein sequence ID" value="CE08571"/>
    <property type="gene ID" value="WBGene00003850"/>
    <property type="gene designation" value="odr-3"/>
</dbReference>
<dbReference type="eggNOG" id="KOG0082">
    <property type="taxonomic scope" value="Eukaryota"/>
</dbReference>
<dbReference type="HOGENOM" id="CLU_014184_6_0_1"/>
<dbReference type="InParanoid" id="Q18434"/>
<dbReference type="OMA" id="HEPGYRP"/>
<dbReference type="OrthoDB" id="5817230at2759"/>
<dbReference type="PhylomeDB" id="Q18434"/>
<dbReference type="PRO" id="PR:Q18434"/>
<dbReference type="Proteomes" id="UP000001940">
    <property type="component" value="Chromosome V"/>
</dbReference>
<dbReference type="Bgee" id="WBGene00003850">
    <property type="expression patterns" value="Expressed in pharyngeal muscle cell (C elegans) and 3 other cell types or tissues"/>
</dbReference>
<dbReference type="GO" id="GO:0005737">
    <property type="term" value="C:cytoplasm"/>
    <property type="evidence" value="ECO:0000318"/>
    <property type="project" value="GO_Central"/>
</dbReference>
<dbReference type="GO" id="GO:0030425">
    <property type="term" value="C:dendrite"/>
    <property type="evidence" value="ECO:0007669"/>
    <property type="project" value="UniProtKB-SubCell"/>
</dbReference>
<dbReference type="GO" id="GO:0005834">
    <property type="term" value="C:heterotrimeric G-protein complex"/>
    <property type="evidence" value="ECO:0000318"/>
    <property type="project" value="GO_Central"/>
</dbReference>
<dbReference type="GO" id="GO:0043025">
    <property type="term" value="C:neuronal cell body"/>
    <property type="evidence" value="ECO:0000314"/>
    <property type="project" value="WormBase"/>
</dbReference>
<dbReference type="GO" id="GO:0097730">
    <property type="term" value="C:non-motile cilium"/>
    <property type="evidence" value="ECO:0000314"/>
    <property type="project" value="WormBase"/>
</dbReference>
<dbReference type="GO" id="GO:0001664">
    <property type="term" value="F:G protein-coupled receptor binding"/>
    <property type="evidence" value="ECO:0000318"/>
    <property type="project" value="GO_Central"/>
</dbReference>
<dbReference type="GO" id="GO:0031683">
    <property type="term" value="F:G-protein beta/gamma-subunit complex binding"/>
    <property type="evidence" value="ECO:0000318"/>
    <property type="project" value="GO_Central"/>
</dbReference>
<dbReference type="GO" id="GO:0005525">
    <property type="term" value="F:GTP binding"/>
    <property type="evidence" value="ECO:0007669"/>
    <property type="project" value="UniProtKB-KW"/>
</dbReference>
<dbReference type="GO" id="GO:0003924">
    <property type="term" value="F:GTPase activity"/>
    <property type="evidence" value="ECO:0000318"/>
    <property type="project" value="GO_Central"/>
</dbReference>
<dbReference type="GO" id="GO:0046872">
    <property type="term" value="F:metal ion binding"/>
    <property type="evidence" value="ECO:0007669"/>
    <property type="project" value="UniProtKB-KW"/>
</dbReference>
<dbReference type="GO" id="GO:0031849">
    <property type="term" value="F:olfactory receptor binding"/>
    <property type="evidence" value="ECO:0000353"/>
    <property type="project" value="WormBase"/>
</dbReference>
<dbReference type="GO" id="GO:0007188">
    <property type="term" value="P:adenylate cyclase-modulating G protein-coupled receptor signaling pathway"/>
    <property type="evidence" value="ECO:0000318"/>
    <property type="project" value="GO_Central"/>
</dbReference>
<dbReference type="GO" id="GO:0006935">
    <property type="term" value="P:chemotaxis"/>
    <property type="evidence" value="ECO:0007669"/>
    <property type="project" value="UniProtKB-KW"/>
</dbReference>
<dbReference type="GO" id="GO:0060271">
    <property type="term" value="P:cilium assembly"/>
    <property type="evidence" value="ECO:0000315"/>
    <property type="project" value="UniProtKB"/>
</dbReference>
<dbReference type="GO" id="GO:0006972">
    <property type="term" value="P:hyperosmotic response"/>
    <property type="evidence" value="ECO:0000315"/>
    <property type="project" value="WormBase"/>
</dbReference>
<dbReference type="GO" id="GO:0042048">
    <property type="term" value="P:olfactory behavior"/>
    <property type="evidence" value="ECO:0000315"/>
    <property type="project" value="UniProtKB"/>
</dbReference>
<dbReference type="GO" id="GO:1990834">
    <property type="term" value="P:response to odorant"/>
    <property type="evidence" value="ECO:0000315"/>
    <property type="project" value="UniProtKB"/>
</dbReference>
<dbReference type="GO" id="GO:0007608">
    <property type="term" value="P:sensory perception of smell"/>
    <property type="evidence" value="ECO:0007669"/>
    <property type="project" value="UniProtKB-KW"/>
</dbReference>
<dbReference type="CDD" id="cd00066">
    <property type="entry name" value="G-alpha"/>
    <property type="match status" value="1"/>
</dbReference>
<dbReference type="FunFam" id="1.10.400.10:FF:000011">
    <property type="entry name" value="Guanine nucleotide-binding protein alpha-1 subunit"/>
    <property type="match status" value="1"/>
</dbReference>
<dbReference type="FunFam" id="3.40.50.300:FF:000041">
    <property type="entry name" value="Guanine nucleotide-binding protein G(I) subunit alpha"/>
    <property type="match status" value="1"/>
</dbReference>
<dbReference type="Gene3D" id="1.10.400.10">
    <property type="entry name" value="GI Alpha 1, domain 2-like"/>
    <property type="match status" value="1"/>
</dbReference>
<dbReference type="Gene3D" id="3.40.50.300">
    <property type="entry name" value="P-loop containing nucleotide triphosphate hydrolases"/>
    <property type="match status" value="1"/>
</dbReference>
<dbReference type="InterPro" id="IPR001408">
    <property type="entry name" value="Gprotein_alpha_I"/>
</dbReference>
<dbReference type="InterPro" id="IPR001019">
    <property type="entry name" value="Gprotein_alpha_su"/>
</dbReference>
<dbReference type="InterPro" id="IPR011025">
    <property type="entry name" value="GproteinA_insert"/>
</dbReference>
<dbReference type="InterPro" id="IPR027417">
    <property type="entry name" value="P-loop_NTPase"/>
</dbReference>
<dbReference type="PANTHER" id="PTHR10218">
    <property type="entry name" value="GTP-BINDING PROTEIN ALPHA SUBUNIT"/>
    <property type="match status" value="1"/>
</dbReference>
<dbReference type="PANTHER" id="PTHR10218:SF215">
    <property type="entry name" value="GUANINE NUCLEOTIDE-BINDING PROTEIN ALPHA-17 SUBUNIT"/>
    <property type="match status" value="1"/>
</dbReference>
<dbReference type="Pfam" id="PF00503">
    <property type="entry name" value="G-alpha"/>
    <property type="match status" value="1"/>
</dbReference>
<dbReference type="PRINTS" id="PR00318">
    <property type="entry name" value="GPROTEINA"/>
</dbReference>
<dbReference type="PRINTS" id="PR00441">
    <property type="entry name" value="GPROTEINAI"/>
</dbReference>
<dbReference type="SMART" id="SM00275">
    <property type="entry name" value="G_alpha"/>
    <property type="match status" value="1"/>
</dbReference>
<dbReference type="SUPFAM" id="SSF52540">
    <property type="entry name" value="P-loop containing nucleoside triphosphate hydrolases"/>
    <property type="match status" value="1"/>
</dbReference>
<dbReference type="SUPFAM" id="SSF47895">
    <property type="entry name" value="Transducin (alpha subunit), insertion domain"/>
    <property type="match status" value="1"/>
</dbReference>
<dbReference type="PROSITE" id="PS51882">
    <property type="entry name" value="G_ALPHA"/>
    <property type="match status" value="1"/>
</dbReference>
<proteinExistence type="evidence at protein level"/>
<protein>
    <recommendedName>
        <fullName>Guanine nucleotide-binding protein alpha-17 subunit</fullName>
    </recommendedName>
    <alternativeName>
        <fullName>Odorant response abnormal protein 3</fullName>
    </alternativeName>
</protein>
<reference key="1">
    <citation type="journal article" date="1998" name="Neuron">
        <title>The G alpha protein ODR-3 mediates olfactory and nociceptive function and controls cilium morphogenesis in C. elegans olfactory neurons.</title>
        <authorList>
            <person name="Roayaie K."/>
            <person name="Crump J.G."/>
            <person name="Sagasti A."/>
            <person name="Bargmann C.I."/>
        </authorList>
    </citation>
    <scope>NUCLEOTIDE SEQUENCE [MRNA]</scope>
    <scope>FUNCTION</scope>
    <scope>TISSUE SPECIFICITY</scope>
    <scope>DISRUPTION PHENOTYPE</scope>
    <scope>MUTAGENESIS OF SER-47 AND GLN-206</scope>
</reference>
<reference key="2">
    <citation type="journal article" date="2003" name="Comp. Funct. Genomics">
        <title>Proteins interacting with Caenorhabditis elegans Galpha subunits.</title>
        <authorList>
            <person name="Cuppen E."/>
            <person name="van der Linden A.M."/>
            <person name="Jansen G."/>
            <person name="Plasterk R.H."/>
        </authorList>
    </citation>
    <scope>NUCLEOTIDE SEQUENCE [MRNA]</scope>
    <source>
        <strain>Bristol N2</strain>
    </source>
</reference>
<reference key="3">
    <citation type="journal article" date="2009" name="Genetics">
        <title>High nucleotide divergence in developmental regulatory genes contrasts with the structural elements of olfactory pathways in caenorhabditis.</title>
        <authorList>
            <person name="Jovelin R."/>
            <person name="Dunham J.P."/>
            <person name="Sung F.S."/>
            <person name="Phillips P.C."/>
        </authorList>
    </citation>
    <scope>NUCLEOTIDE SEQUENCE [GENOMIC DNA]</scope>
    <source>
        <strain>PX174</strain>
        <strain>PX178</strain>
        <strain>PX179</strain>
    </source>
</reference>
<reference key="4">
    <citation type="journal article" date="1998" name="Science">
        <title>Genome sequence of the nematode C. elegans: a platform for investigating biology.</title>
        <authorList>
            <consortium name="The C. elegans sequencing consortium"/>
        </authorList>
    </citation>
    <scope>NUCLEOTIDE SEQUENCE [LARGE SCALE GENOMIC DNA]</scope>
    <source>
        <strain>Bristol N2</strain>
    </source>
</reference>
<reference key="5">
    <citation type="journal article" date="2003" name="Mol. Ecol.">
        <title>Molecular evolution and quantitative variation for chemosensory behaviour in the nematode genus Caenorhabditis.</title>
        <authorList>
            <person name="Jovelin R."/>
            <person name="Ajie B.C."/>
            <person name="Phillips P.C."/>
        </authorList>
    </citation>
    <scope>NUCLEOTIDE SEQUENCE [GENOMIC DNA] OF 1-350</scope>
    <scope>FUNCTION</scope>
    <scope>DISRUPTION PHENOTYPE</scope>
    <source>
        <strain>AB3</strain>
        <strain>BO</strain>
        <strain>CB4855</strain>
        <strain>CB4856</strain>
        <strain>CB4857</strain>
        <strain>CB4932</strain>
        <strain>DH424</strain>
        <strain>RC301</strain>
        <strain>TR403</strain>
    </source>
</reference>
<reference key="6">
    <citation type="journal article" date="1999" name="Nat. Genet.">
        <title>The complete family of genes encoding G proteins of Caenorhabditis elegans.</title>
        <authorList>
            <person name="Jansen G."/>
            <person name="Thijssen K.L."/>
            <person name="Werner P."/>
            <person name="van der Horst M."/>
            <person name="Hazendonk E."/>
            <person name="Plasterk R.H.A."/>
        </authorList>
    </citation>
    <scope>GENE FAMILY</scope>
    <scope>NOMENCLATURE</scope>
    <scope>FUNCTION</scope>
</reference>
<reference key="7">
    <citation type="journal article" date="2004" name="EMBO J.">
        <title>Worms taste bitter: ASH neurons, QUI-1, GPA-3 and ODR-3 mediate quinine avoidance in Caenorhabditis elegans.</title>
        <authorList>
            <person name="Hilliard M.A."/>
            <person name="Bergamasco C."/>
            <person name="Arbucci S."/>
            <person name="Plasterk R.H."/>
            <person name="Bazzicalupo P."/>
        </authorList>
    </citation>
    <scope>FUNCTION</scope>
</reference>
<reference key="8">
    <citation type="journal article" date="2004" name="Genetics">
        <title>A network of stimulatory and inhibitory Galpha-subunits regulates olfaction in Caenorhabditis elegans.</title>
        <authorList>
            <person name="Lans H."/>
            <person name="Rademakers S."/>
            <person name="Jansen G."/>
        </authorList>
    </citation>
    <scope>FUNCTION</scope>
    <scope>SUBCELLULAR LOCATION</scope>
    <scope>TISSUE SPECIFICITY</scope>
    <scope>DISRUPTION PHENOTYPE</scope>
</reference>
<reference key="9">
    <citation type="journal article" date="2010" name="Genes Dev.">
        <title>The homeodomain protein hmbx-1 maintains asymmetric gene expression in adult C. elegans olfactory neurons.</title>
        <authorList>
            <person name="Lesch B.J."/>
            <person name="Bargmann C.I."/>
        </authorList>
    </citation>
    <scope>MUTAGENESIS OF GLY-185</scope>
</reference>
<reference key="10">
    <citation type="journal article" date="2014" name="J. Neurosci.">
        <title>Dissecting the signaling mechanisms underlying recognition and preference of food odors.</title>
        <authorList>
            <person name="Harris G."/>
            <person name="Shen Y."/>
            <person name="Ha H."/>
            <person name="Donato A."/>
            <person name="Wallis S."/>
            <person name="Zhang X."/>
            <person name="Zhang Y."/>
        </authorList>
    </citation>
    <scope>FUNCTION</scope>
</reference>
<name>GPA17_CAEEL</name>
<keyword id="KW-0966">Cell projection</keyword>
<keyword id="KW-0145">Chemotaxis</keyword>
<keyword id="KW-0969">Cilium</keyword>
<keyword id="KW-0342">GTP-binding</keyword>
<keyword id="KW-0449">Lipoprotein</keyword>
<keyword id="KW-0460">Magnesium</keyword>
<keyword id="KW-0479">Metal-binding</keyword>
<keyword id="KW-0519">Myristate</keyword>
<keyword id="KW-0547">Nucleotide-binding</keyword>
<keyword id="KW-0552">Olfaction</keyword>
<keyword id="KW-0564">Palmitate</keyword>
<keyword id="KW-1185">Reference proteome</keyword>
<keyword id="KW-0716">Sensory transduction</keyword>
<keyword id="KW-0807">Transducer</keyword>
<sequence>MGSCQSNENSEGNARNKEIEKQLNADKRAGSSIVKLLLLGAGECGKSTVLKQMQILHSNGFTEEEVNEKRAIVYNNTVSAMCTILRAMDGVLHLPLENGQKEAEKAIVMKVQENGEEGEALTEEVSKAIQSLWADPGVKKAFEMRSEYQLPDSAKYFLDNCQRISEPGYRPNDQDILYSRVATTGVVEVKFKIKELDFRVFDVGGQRSERRKWIHCFDNVESIIFITAISEYDQVLFEDETTNRMIESMQLFNSICNSTWFLSTAMILFMNKKDLFMEKIQRVNITTAFPDYEGGQNYEEAVSFIKQKFAELNLNPDKKTIYMHETCATDTNQVQLVISSVIDTIIQKNLQKAGMM</sequence>
<accession>Q18434</accession>
<accession>C3U544</accession>
<accession>Q867E1</accession>
<accession>Q867N8</accession>
<accession>Q868B7</accession>
<accession>Q86FY4</accession>
<accession>Q86FY5</accession>
<organism>
    <name type="scientific">Caenorhabditis elegans</name>
    <dbReference type="NCBI Taxonomy" id="6239"/>
    <lineage>
        <taxon>Eukaryota</taxon>
        <taxon>Metazoa</taxon>
        <taxon>Ecdysozoa</taxon>
        <taxon>Nematoda</taxon>
        <taxon>Chromadorea</taxon>
        <taxon>Rhabditida</taxon>
        <taxon>Rhabditina</taxon>
        <taxon>Rhabditomorpha</taxon>
        <taxon>Rhabditoidea</taxon>
        <taxon>Rhabditidae</taxon>
        <taxon>Peloderinae</taxon>
        <taxon>Caenorhabditis</taxon>
    </lineage>
</organism>
<comment type="function">
    <text evidence="4 5 6 7 9 10">Guanine nucleotide-binding proteins (G proteins) are involved as modulators or transducers in various transmembrane signaling systems (PubMed:10192394). This specific G-alpha subunit plays an important role in olfaction and in cilia morphogenesis (PubMed:15342507, PubMed:9459442). Involved in chemotactic responses to attractants diacetyl, pyrazine, 2,4,5-trimethylthiazole, benzaldehyde, isoamyl alcohol, butanone and 2,3-pentanedione (PubMed:12694294). Displays a redundant function with gpa-3 in chemotactic responses (PubMed:12694294). Plays a role in the avoidance response to the noxious chemical quinine in ASH sensory neurons (PubMed:14988722). Involved in avoidance responses to copper, sodium dodecyl sulfate and linoleic acid (PubMed:12694294). Involved in osmotic avoidance and mechanosensory responses (PubMed:12694294). Involved in specifying fan-like morphology of cilia of head sensory neurons AWC (PubMed:9459442). Plays a role in the detection of preferred food sources by mediating the recognition of food odors in olfactory sensory neurons (PubMed:25009271).</text>
</comment>
<comment type="subunit">
    <text evidence="1">G proteins are composed of 3 units; alpha, beta and gamma. The alpha chain contains the guanine nucleotide binding site (By similarity).</text>
</comment>
<comment type="subcellular location">
    <subcellularLocation>
        <location evidence="7">Cell projection</location>
        <location evidence="7">Cilium</location>
    </subcellularLocation>
    <subcellularLocation>
        <location evidence="7">Cell projection</location>
        <location evidence="7">Dendrite</location>
    </subcellularLocation>
    <text>In amphid neurons also weakly expressed in cell body. In phasmid neurons found only in cilia.</text>
</comment>
<comment type="tissue specificity">
    <text evidence="7 10">Expressed in sensory neurons in the head and tail. Expressed in amphid AWC neurons, to a lesser extent in AWB and weakly in AWA, ASH and ADF neurons (head sensory neurons). Expressed in phasmid PHA and PHB neurons (tail sensory neurons).</text>
</comment>
<comment type="disruption phenotype">
    <text evidence="5 7 10">Defective in chemotactic responses to attractants and repellents and in osmotic and mechanosensory avoidance.</text>
</comment>
<comment type="similarity">
    <text evidence="11">Belongs to the G-alpha family.</text>
</comment>
<gene>
    <name evidence="12" type="primary">odr-3</name>
    <name evidence="12" type="ORF">C34D1.3</name>
</gene>
<evidence type="ECO:0000250" key="1"/>
<evidence type="ECO:0000255" key="2"/>
<evidence type="ECO:0000255" key="3">
    <source>
        <dbReference type="PROSITE-ProRule" id="PRU01230"/>
    </source>
</evidence>
<evidence type="ECO:0000269" key="4">
    <source>
    </source>
</evidence>
<evidence type="ECO:0000269" key="5">
    <source>
    </source>
</evidence>
<evidence type="ECO:0000269" key="6">
    <source>
    </source>
</evidence>
<evidence type="ECO:0000269" key="7">
    <source>
    </source>
</evidence>
<evidence type="ECO:0000269" key="8">
    <source>
    </source>
</evidence>
<evidence type="ECO:0000269" key="9">
    <source>
    </source>
</evidence>
<evidence type="ECO:0000269" key="10">
    <source>
    </source>
</evidence>
<evidence type="ECO:0000305" key="11"/>
<evidence type="ECO:0000312" key="12">
    <source>
        <dbReference type="WormBase" id="C34D1.3"/>
    </source>
</evidence>